<evidence type="ECO:0000255" key="1">
    <source>
        <dbReference type="HAMAP-Rule" id="MF_01371"/>
    </source>
</evidence>
<evidence type="ECO:0000305" key="2"/>
<organism>
    <name type="scientific">Psychrobacter arcticus (strain DSM 17307 / VKM B-2377 / 273-4)</name>
    <dbReference type="NCBI Taxonomy" id="259536"/>
    <lineage>
        <taxon>Bacteria</taxon>
        <taxon>Pseudomonadati</taxon>
        <taxon>Pseudomonadota</taxon>
        <taxon>Gammaproteobacteria</taxon>
        <taxon>Moraxellales</taxon>
        <taxon>Moraxellaceae</taxon>
        <taxon>Psychrobacter</taxon>
    </lineage>
</organism>
<comment type="subunit">
    <text evidence="1">Part of the 50S ribosomal subunit.</text>
</comment>
<comment type="similarity">
    <text evidence="1">Belongs to the universal ribosomal protein uL30 family.</text>
</comment>
<reference key="1">
    <citation type="journal article" date="2010" name="Appl. Environ. Microbiol.">
        <title>The genome sequence of Psychrobacter arcticus 273-4, a psychroactive Siberian permafrost bacterium, reveals mechanisms for adaptation to low-temperature growth.</title>
        <authorList>
            <person name="Ayala-del-Rio H.L."/>
            <person name="Chain P.S."/>
            <person name="Grzymski J.J."/>
            <person name="Ponder M.A."/>
            <person name="Ivanova N."/>
            <person name="Bergholz P.W."/>
            <person name="Di Bartolo G."/>
            <person name="Hauser L."/>
            <person name="Land M."/>
            <person name="Bakermans C."/>
            <person name="Rodrigues D."/>
            <person name="Klappenbach J."/>
            <person name="Zarka D."/>
            <person name="Larimer F."/>
            <person name="Richardson P."/>
            <person name="Murray A."/>
            <person name="Thomashow M."/>
            <person name="Tiedje J.M."/>
        </authorList>
    </citation>
    <scope>NUCLEOTIDE SEQUENCE [LARGE SCALE GENOMIC DNA]</scope>
    <source>
        <strain>DSM 17307 / VKM B-2377 / 273-4</strain>
    </source>
</reference>
<feature type="chain" id="PRO_0000273833" description="Large ribosomal subunit protein uL30">
    <location>
        <begin position="1"/>
        <end position="59"/>
    </location>
</feature>
<dbReference type="EMBL" id="CP000082">
    <property type="protein sequence ID" value="AAZ18370.1"/>
    <property type="molecule type" value="Genomic_DNA"/>
</dbReference>
<dbReference type="RefSeq" id="WP_011279802.1">
    <property type="nucleotide sequence ID" value="NC_007204.1"/>
</dbReference>
<dbReference type="SMR" id="Q4FUD8"/>
<dbReference type="STRING" id="259536.Psyc_0507"/>
<dbReference type="KEGG" id="par:Psyc_0507"/>
<dbReference type="eggNOG" id="COG1841">
    <property type="taxonomic scope" value="Bacteria"/>
</dbReference>
<dbReference type="HOGENOM" id="CLU_131047_1_4_6"/>
<dbReference type="OrthoDB" id="9812790at2"/>
<dbReference type="Proteomes" id="UP000000546">
    <property type="component" value="Chromosome"/>
</dbReference>
<dbReference type="GO" id="GO:0022625">
    <property type="term" value="C:cytosolic large ribosomal subunit"/>
    <property type="evidence" value="ECO:0007669"/>
    <property type="project" value="TreeGrafter"/>
</dbReference>
<dbReference type="GO" id="GO:0003735">
    <property type="term" value="F:structural constituent of ribosome"/>
    <property type="evidence" value="ECO:0007669"/>
    <property type="project" value="InterPro"/>
</dbReference>
<dbReference type="GO" id="GO:0006412">
    <property type="term" value="P:translation"/>
    <property type="evidence" value="ECO:0007669"/>
    <property type="project" value="UniProtKB-UniRule"/>
</dbReference>
<dbReference type="CDD" id="cd01658">
    <property type="entry name" value="Ribosomal_L30"/>
    <property type="match status" value="1"/>
</dbReference>
<dbReference type="FunFam" id="3.30.1390.20:FF:000001">
    <property type="entry name" value="50S ribosomal protein L30"/>
    <property type="match status" value="1"/>
</dbReference>
<dbReference type="Gene3D" id="3.30.1390.20">
    <property type="entry name" value="Ribosomal protein L30, ferredoxin-like fold domain"/>
    <property type="match status" value="1"/>
</dbReference>
<dbReference type="HAMAP" id="MF_01371_B">
    <property type="entry name" value="Ribosomal_uL30_B"/>
    <property type="match status" value="1"/>
</dbReference>
<dbReference type="InterPro" id="IPR036919">
    <property type="entry name" value="Ribo_uL30_ferredoxin-like_sf"/>
</dbReference>
<dbReference type="InterPro" id="IPR005996">
    <property type="entry name" value="Ribosomal_uL30_bac-type"/>
</dbReference>
<dbReference type="InterPro" id="IPR018038">
    <property type="entry name" value="Ribosomal_uL30_CS"/>
</dbReference>
<dbReference type="InterPro" id="IPR016082">
    <property type="entry name" value="Ribosomal_uL30_ferredoxin-like"/>
</dbReference>
<dbReference type="NCBIfam" id="TIGR01308">
    <property type="entry name" value="rpmD_bact"/>
    <property type="match status" value="1"/>
</dbReference>
<dbReference type="PANTHER" id="PTHR15892:SF2">
    <property type="entry name" value="LARGE RIBOSOMAL SUBUNIT PROTEIN UL30M"/>
    <property type="match status" value="1"/>
</dbReference>
<dbReference type="PANTHER" id="PTHR15892">
    <property type="entry name" value="MITOCHONDRIAL RIBOSOMAL PROTEIN L30"/>
    <property type="match status" value="1"/>
</dbReference>
<dbReference type="Pfam" id="PF00327">
    <property type="entry name" value="Ribosomal_L30"/>
    <property type="match status" value="1"/>
</dbReference>
<dbReference type="PIRSF" id="PIRSF002211">
    <property type="entry name" value="Ribosomal_L30_bac-type"/>
    <property type="match status" value="1"/>
</dbReference>
<dbReference type="SUPFAM" id="SSF55129">
    <property type="entry name" value="Ribosomal protein L30p/L7e"/>
    <property type="match status" value="1"/>
</dbReference>
<dbReference type="PROSITE" id="PS00634">
    <property type="entry name" value="RIBOSOMAL_L30"/>
    <property type="match status" value="1"/>
</dbReference>
<proteinExistence type="inferred from homology"/>
<protein>
    <recommendedName>
        <fullName evidence="1">Large ribosomal subunit protein uL30</fullName>
    </recommendedName>
    <alternativeName>
        <fullName evidence="2">50S ribosomal protein L30</fullName>
    </alternativeName>
</protein>
<keyword id="KW-1185">Reference proteome</keyword>
<keyword id="KW-0687">Ribonucleoprotein</keyword>
<keyword id="KW-0689">Ribosomal protein</keyword>
<accession>Q4FUD8</accession>
<sequence>MKKMKVTQFKSGAHRLKSHKASLKGLGLRRINHTVIVEDTPSTRGMVNRVNYLVKVEEA</sequence>
<name>RL30_PSYA2</name>
<gene>
    <name evidence="1" type="primary">rpmD</name>
    <name type="ordered locus">Psyc_0507</name>
</gene>